<comment type="function">
    <text>Core component of nucleosome. Nucleosomes wrap and compact DNA into chromatin, limiting DNA accessibility to the cellular machineries which require DNA as a template. Histones thereby play a central role in transcription regulation, DNA repair, DNA replication and chromosomal stability. DNA accessibility is regulated via a complex set of post-translational modifications of histones, also called histone code, and nucleosome remodeling.</text>
</comment>
<comment type="subunit">
    <text evidence="3 5">The nucleosome is a histone octamer containing two molecules each of H2A, H2B, H3 and H4 assembled in one H3-H4 heterotetramer and two H2A-H2B heterodimers. The octamer wraps approximately 147 bp of DNA. Interacts with ORTH2 (PubMed:17242155). Interacts with AHL27 (PubMed:24218605).</text>
</comment>
<comment type="subcellular location">
    <subcellularLocation>
        <location evidence="1">Nucleus</location>
    </subcellularLocation>
    <subcellularLocation>
        <location evidence="1">Chromosome</location>
    </subcellularLocation>
</comment>
<comment type="alternative products">
    <event type="alternative splicing"/>
    <isoform>
        <id>P59259-1</id>
        <name>1</name>
        <sequence type="displayed"/>
    </isoform>
    <text>A number of isoforms are produced. According to EST sequences.</text>
</comment>
<comment type="PTM">
    <text evidence="4">May be acetylated by MBD9.</text>
</comment>
<comment type="similarity">
    <text evidence="6">Belongs to the histone H4 family.</text>
</comment>
<gene>
    <name type="ordered locus">At1g07660</name>
    <name type="ORF">F24B9.25</name>
</gene>
<gene>
    <name type="ordered locus">At1g07820</name>
    <name type="ORF">F24B9.8</name>
</gene>
<gene>
    <name type="ordered locus">At2g28740</name>
    <name type="ORF">F8N16.2</name>
    <name type="ORF">T11P11.4</name>
</gene>
<gene>
    <name type="ordered locus">At3g45930</name>
    <name type="ORF">F16L2_140</name>
</gene>
<gene>
    <name type="ordered locus">At3g46320</name>
    <name type="ORF">F18L15.40</name>
</gene>
<gene>
    <name type="ordered locus">At3g53730</name>
    <name type="ORF">F5K20_30</name>
</gene>
<gene>
    <name type="ordered locus">At5g59690</name>
    <name type="ORF">MTH12.10</name>
</gene>
<gene>
    <name type="ordered locus">At5g59970</name>
    <name type="ORF">MMN10.22</name>
</gene>
<accession>P59259</accession>
<accession>P02308</accession>
<evidence type="ECO:0000250" key="1"/>
<evidence type="ECO:0000256" key="2">
    <source>
        <dbReference type="SAM" id="MobiDB-lite"/>
    </source>
</evidence>
<evidence type="ECO:0000269" key="3">
    <source>
    </source>
</evidence>
<evidence type="ECO:0000269" key="4">
    <source>
    </source>
</evidence>
<evidence type="ECO:0000269" key="5">
    <source>
    </source>
</evidence>
<evidence type="ECO:0000305" key="6"/>
<evidence type="ECO:0007829" key="7">
    <source>
        <dbReference type="PDB" id="8J91"/>
    </source>
</evidence>
<evidence type="ECO:0007829" key="8">
    <source>
        <dbReference type="PDB" id="8J92"/>
    </source>
</evidence>
<keyword id="KW-0002">3D-structure</keyword>
<keyword id="KW-0007">Acetylation</keyword>
<keyword id="KW-0025">Alternative splicing</keyword>
<keyword id="KW-0158">Chromosome</keyword>
<keyword id="KW-0238">DNA-binding</keyword>
<keyword id="KW-0544">Nucleosome core</keyword>
<keyword id="KW-0539">Nucleus</keyword>
<keyword id="KW-1185">Reference proteome</keyword>
<protein>
    <recommendedName>
        <fullName>Histone H4</fullName>
    </recommendedName>
</protein>
<organism>
    <name type="scientific">Arabidopsis thaliana</name>
    <name type="common">Mouse-ear cress</name>
    <dbReference type="NCBI Taxonomy" id="3702"/>
    <lineage>
        <taxon>Eukaryota</taxon>
        <taxon>Viridiplantae</taxon>
        <taxon>Streptophyta</taxon>
        <taxon>Embryophyta</taxon>
        <taxon>Tracheophyta</taxon>
        <taxon>Spermatophyta</taxon>
        <taxon>Magnoliopsida</taxon>
        <taxon>eudicotyledons</taxon>
        <taxon>Gunneridae</taxon>
        <taxon>Pentapetalae</taxon>
        <taxon>rosids</taxon>
        <taxon>malvids</taxon>
        <taxon>Brassicales</taxon>
        <taxon>Brassicaceae</taxon>
        <taxon>Camelineae</taxon>
        <taxon>Arabidopsis</taxon>
    </lineage>
</organism>
<name>H4_ARATH</name>
<feature type="chain" id="PRO_0000158278" description="Histone H4">
    <location>
        <begin position="1"/>
        <end position="103"/>
    </location>
</feature>
<feature type="DNA-binding region">
    <location>
        <begin position="17"/>
        <end position="21"/>
    </location>
</feature>
<feature type="region of interest" description="Disordered" evidence="2">
    <location>
        <begin position="1"/>
        <end position="20"/>
    </location>
</feature>
<feature type="compositionally biased region" description="Gly residues" evidence="2">
    <location>
        <begin position="1"/>
        <end position="14"/>
    </location>
</feature>
<feature type="helix" evidence="7">
    <location>
        <begin position="27"/>
        <end position="29"/>
    </location>
</feature>
<feature type="helix" evidence="7">
    <location>
        <begin position="32"/>
        <end position="41"/>
    </location>
</feature>
<feature type="strand" evidence="8">
    <location>
        <begin position="45"/>
        <end position="47"/>
    </location>
</feature>
<feature type="helix" evidence="7">
    <location>
        <begin position="51"/>
        <end position="76"/>
    </location>
</feature>
<feature type="strand" evidence="7">
    <location>
        <begin position="80"/>
        <end position="82"/>
    </location>
</feature>
<feature type="helix" evidence="7">
    <location>
        <begin position="84"/>
        <end position="93"/>
    </location>
</feature>
<feature type="strand" evidence="7">
    <location>
        <begin position="98"/>
        <end position="101"/>
    </location>
</feature>
<dbReference type="EMBL" id="M17132">
    <property type="protein sequence ID" value="AAA32810.1"/>
    <property type="molecule type" value="Genomic_DNA"/>
</dbReference>
<dbReference type="EMBL" id="M17133">
    <property type="protein sequence ID" value="AAA32811.1"/>
    <property type="molecule type" value="Genomic_DNA"/>
</dbReference>
<dbReference type="EMBL" id="AC007583">
    <property type="protein sequence ID" value="AAF75089.1"/>
    <property type="molecule type" value="Genomic_DNA"/>
</dbReference>
<dbReference type="EMBL" id="AC007583">
    <property type="protein sequence ID" value="AAF75072.1"/>
    <property type="molecule type" value="Genomic_DNA"/>
</dbReference>
<dbReference type="EMBL" id="AC005727">
    <property type="protein sequence ID" value="AAC79580.1"/>
    <property type="molecule type" value="Genomic_DNA"/>
</dbReference>
<dbReference type="EMBL" id="AC007184">
    <property type="protein sequence ID" value="AAM15445.1"/>
    <property type="molecule type" value="Genomic_DNA"/>
</dbReference>
<dbReference type="EMBL" id="AL162459">
    <property type="protein sequence ID" value="CAB82817.1"/>
    <property type="molecule type" value="Genomic_DNA"/>
</dbReference>
<dbReference type="EMBL" id="AL133298">
    <property type="protein sequence ID" value="CAB62023.1"/>
    <property type="molecule type" value="Genomic_DNA"/>
</dbReference>
<dbReference type="EMBL" id="AL132960">
    <property type="protein sequence ID" value="CAB88335.1"/>
    <property type="molecule type" value="Genomic_DNA"/>
</dbReference>
<dbReference type="EMBL" id="AB006705">
    <property type="protein sequence ID" value="BAB09507.1"/>
    <property type="molecule type" value="Genomic_DNA"/>
</dbReference>
<dbReference type="EMBL" id="AB015475">
    <property type="protein sequence ID" value="BAB08365.1"/>
    <property type="molecule type" value="Genomic_DNA"/>
</dbReference>
<dbReference type="EMBL" id="CP002684">
    <property type="protein sequence ID" value="AEE28158.1"/>
    <property type="molecule type" value="Genomic_DNA"/>
</dbReference>
<dbReference type="EMBL" id="CP002684">
    <property type="protein sequence ID" value="AEE28187.1"/>
    <property type="molecule type" value="Genomic_DNA"/>
</dbReference>
<dbReference type="EMBL" id="CP002684">
    <property type="protein sequence ID" value="AEE28188.1"/>
    <property type="molecule type" value="Genomic_DNA"/>
</dbReference>
<dbReference type="EMBL" id="CP002685">
    <property type="protein sequence ID" value="AEC08165.1"/>
    <property type="molecule type" value="Genomic_DNA"/>
</dbReference>
<dbReference type="EMBL" id="CP002686">
    <property type="protein sequence ID" value="AEE78091.1"/>
    <property type="molecule type" value="Genomic_DNA"/>
</dbReference>
<dbReference type="EMBL" id="CP002686">
    <property type="protein sequence ID" value="AEE78146.1"/>
    <property type="molecule type" value="Genomic_DNA"/>
</dbReference>
<dbReference type="EMBL" id="CP002686">
    <property type="protein sequence ID" value="AEE79133.1"/>
    <property type="molecule type" value="Genomic_DNA"/>
</dbReference>
<dbReference type="EMBL" id="CP002688">
    <property type="protein sequence ID" value="AED97220.1"/>
    <property type="molecule type" value="Genomic_DNA"/>
</dbReference>
<dbReference type="EMBL" id="CP002688">
    <property type="protein sequence ID" value="AED97260.1"/>
    <property type="molecule type" value="Genomic_DNA"/>
</dbReference>
<dbReference type="EMBL" id="CP002688">
    <property type="protein sequence ID" value="ANM70482.1"/>
    <property type="molecule type" value="Genomic_DNA"/>
</dbReference>
<dbReference type="EMBL" id="AF325058">
    <property type="protein sequence ID" value="AAG40410.1"/>
    <property type="molecule type" value="mRNA"/>
</dbReference>
<dbReference type="EMBL" id="AF334729">
    <property type="protein sequence ID" value="AAG50107.1"/>
    <property type="molecule type" value="mRNA"/>
</dbReference>
<dbReference type="EMBL" id="AY057609">
    <property type="protein sequence ID" value="AAL14404.1"/>
    <property type="molecule type" value="mRNA"/>
</dbReference>
<dbReference type="EMBL" id="AY062717">
    <property type="protein sequence ID" value="AAL32795.1"/>
    <property type="molecule type" value="mRNA"/>
</dbReference>
<dbReference type="EMBL" id="AY063857">
    <property type="protein sequence ID" value="AAL36213.1"/>
    <property type="molecule type" value="mRNA"/>
</dbReference>
<dbReference type="EMBL" id="AY093353">
    <property type="protein sequence ID" value="AAM13352.1"/>
    <property type="molecule type" value="mRNA"/>
</dbReference>
<dbReference type="EMBL" id="AY099675">
    <property type="protein sequence ID" value="AAM20526.1"/>
    <property type="molecule type" value="mRNA"/>
</dbReference>
<dbReference type="EMBL" id="AY124836">
    <property type="protein sequence ID" value="AAM70545.1"/>
    <property type="molecule type" value="mRNA"/>
</dbReference>
<dbReference type="EMBL" id="AY128855">
    <property type="protein sequence ID" value="AAM91255.1"/>
    <property type="molecule type" value="mRNA"/>
</dbReference>
<dbReference type="EMBL" id="AY142651">
    <property type="protein sequence ID" value="AAN13189.1"/>
    <property type="molecule type" value="mRNA"/>
</dbReference>
<dbReference type="EMBL" id="AY085175">
    <property type="protein sequence ID" value="AAM61726.1"/>
    <property type="molecule type" value="mRNA"/>
</dbReference>
<dbReference type="EMBL" id="AY085495">
    <property type="protein sequence ID" value="AAM62721.1"/>
    <property type="molecule type" value="mRNA"/>
</dbReference>
<dbReference type="EMBL" id="AY085965">
    <property type="protein sequence ID" value="AAM63175.1"/>
    <property type="molecule type" value="mRNA"/>
</dbReference>
<dbReference type="EMBL" id="AY086789">
    <property type="protein sequence ID" value="AAM63839.1"/>
    <property type="molecule type" value="mRNA"/>
</dbReference>
<dbReference type="EMBL" id="AY086185">
    <property type="protein sequence ID" value="AAM64264.1"/>
    <property type="molecule type" value="mRNA"/>
</dbReference>
<dbReference type="EMBL" id="AY087061">
    <property type="protein sequence ID" value="AAM64622.1"/>
    <property type="molecule type" value="mRNA"/>
</dbReference>
<dbReference type="EMBL" id="AY087188">
    <property type="protein sequence ID" value="AAM64744.1"/>
    <property type="molecule type" value="mRNA"/>
</dbReference>
<dbReference type="PIR" id="E84688">
    <property type="entry name" value="E84688"/>
</dbReference>
<dbReference type="PIR" id="S06904">
    <property type="entry name" value="S06904"/>
</dbReference>
<dbReference type="RefSeq" id="NP_001332089.1">
    <molecule id="P59259-1"/>
    <property type="nucleotide sequence ID" value="NM_001345379.1"/>
</dbReference>
<dbReference type="RefSeq" id="NP_180441.1">
    <molecule id="P59259-1"/>
    <property type="nucleotide sequence ID" value="NM_128434.4"/>
</dbReference>
<dbReference type="RefSeq" id="NP_190179.1">
    <molecule id="P59259-1"/>
    <property type="nucleotide sequence ID" value="NM_114462.5"/>
</dbReference>
<dbReference type="RefSeq" id="NP_190941.1">
    <molecule id="P59259-1"/>
    <property type="nucleotide sequence ID" value="NM_115233.3"/>
</dbReference>
<dbReference type="RefSeq" id="NP_563793.1">
    <molecule id="P59259-1"/>
    <property type="nucleotide sequence ID" value="NM_100639.3"/>
</dbReference>
<dbReference type="RefSeq" id="NP_563797.1">
    <molecule id="P59259-1"/>
    <property type="nucleotide sequence ID" value="NM_100656.6"/>
</dbReference>
<dbReference type="RefSeq" id="NP_568911.1">
    <molecule id="P59259-1"/>
    <property type="nucleotide sequence ID" value="NM_125361.3"/>
</dbReference>
<dbReference type="RefSeq" id="NP_568918.1">
    <molecule id="P59259-1"/>
    <property type="nucleotide sequence ID" value="NM_125390.4"/>
</dbReference>
<dbReference type="RefSeq" id="NP_850660.1">
    <molecule id="P59259-1"/>
    <property type="nucleotide sequence ID" value="NM_180329.3"/>
</dbReference>
<dbReference type="RefSeq" id="NP_850939.1">
    <molecule id="P59259-1"/>
    <property type="nucleotide sequence ID" value="NM_180608.3"/>
</dbReference>
<dbReference type="PDB" id="8J90">
    <property type="method" value="EM"/>
    <property type="resolution" value="4.71 A"/>
    <property type="chains" value="B/F=1-103"/>
</dbReference>
<dbReference type="PDB" id="8J91">
    <property type="method" value="EM"/>
    <property type="resolution" value="2.90 A"/>
    <property type="chains" value="B/F=1-103"/>
</dbReference>
<dbReference type="PDB" id="8J92">
    <property type="method" value="EM"/>
    <property type="resolution" value="2.90 A"/>
    <property type="chains" value="B/F=1-103"/>
</dbReference>
<dbReference type="PDB" id="8KCB">
    <property type="method" value="EM"/>
    <property type="resolution" value="3.17 A"/>
    <property type="chains" value="G/H=1-103"/>
</dbReference>
<dbReference type="PDB" id="8KCC">
    <property type="method" value="EM"/>
    <property type="resolution" value="3.10 A"/>
    <property type="chains" value="G/H=1-103"/>
</dbReference>
<dbReference type="PDB" id="8WH5">
    <property type="method" value="EM"/>
    <property type="resolution" value="3.58 A"/>
    <property type="chains" value="B/F=1-103"/>
</dbReference>
<dbReference type="PDB" id="8WH8">
    <property type="method" value="EM"/>
    <property type="resolution" value="3.60 A"/>
    <property type="chains" value="B/F=1-103"/>
</dbReference>
<dbReference type="PDB" id="8WH9">
    <property type="method" value="EM"/>
    <property type="resolution" value="3.31 A"/>
    <property type="chains" value="B/F=1-103"/>
</dbReference>
<dbReference type="PDB" id="8WHA">
    <property type="method" value="EM"/>
    <property type="resolution" value="4.05 A"/>
    <property type="chains" value="B/F=1-103"/>
</dbReference>
<dbReference type="PDB" id="8WHB">
    <property type="method" value="EM"/>
    <property type="resolution" value="3.17 A"/>
    <property type="chains" value="B/F=1-103"/>
</dbReference>
<dbReference type="PDBsum" id="8J90"/>
<dbReference type="PDBsum" id="8J91"/>
<dbReference type="PDBsum" id="8J92"/>
<dbReference type="PDBsum" id="8KCB"/>
<dbReference type="PDBsum" id="8KCC"/>
<dbReference type="PDBsum" id="8WH5"/>
<dbReference type="PDBsum" id="8WH8"/>
<dbReference type="PDBsum" id="8WH9"/>
<dbReference type="PDBsum" id="8WHA"/>
<dbReference type="PDBsum" id="8WHB"/>
<dbReference type="EMDB" id="EMD-36083"/>
<dbReference type="EMDB" id="EMD-36084"/>
<dbReference type="EMDB" id="EMD-36085"/>
<dbReference type="EMDB" id="EMD-37098"/>
<dbReference type="EMDB" id="EMD-37099"/>
<dbReference type="EMDB" id="EMD-37529"/>
<dbReference type="EMDB" id="EMD-37533"/>
<dbReference type="EMDB" id="EMD-37535"/>
<dbReference type="EMDB" id="EMD-37537"/>
<dbReference type="EMDB" id="EMD-37538"/>
<dbReference type="SMR" id="P59259"/>
<dbReference type="BioGRID" id="21334">
    <property type="interactions" value="23"/>
</dbReference>
<dbReference type="BioGRID" id="21363">
    <property type="interactions" value="24"/>
</dbReference>
<dbReference type="BioGRID" id="22520">
    <property type="interactions" value="27"/>
</dbReference>
<dbReference type="BioGRID" id="22538">
    <property type="interactions" value="23"/>
</dbReference>
<dbReference type="BioGRID" id="2773">
    <property type="interactions" value="35"/>
</dbReference>
<dbReference type="BioGRID" id="9056">
    <property type="interactions" value="23"/>
</dbReference>
<dbReference type="BioGRID" id="9097">
    <property type="interactions" value="24"/>
</dbReference>
<dbReference type="BioGRID" id="9857">
    <property type="interactions" value="24"/>
</dbReference>
<dbReference type="FunCoup" id="P59259">
    <property type="interactions" value="2645"/>
</dbReference>
<dbReference type="IntAct" id="P59259">
    <property type="interactions" value="9"/>
</dbReference>
<dbReference type="STRING" id="3702.P59259"/>
<dbReference type="iPTMnet" id="P59259"/>
<dbReference type="PaxDb" id="3702-AT1G07660.1"/>
<dbReference type="ProteomicsDB" id="222445">
    <molecule id="P59259-1"/>
</dbReference>
<dbReference type="EnsemblPlants" id="AT1G07660.1">
    <molecule id="P59259-1"/>
    <property type="protein sequence ID" value="AT1G07660.1"/>
    <property type="gene ID" value="AT1G07660"/>
</dbReference>
<dbReference type="EnsemblPlants" id="AT1G07820.1">
    <molecule id="P59259-1"/>
    <property type="protein sequence ID" value="AT1G07820.1"/>
    <property type="gene ID" value="AT1G07820"/>
</dbReference>
<dbReference type="EnsemblPlants" id="AT1G07820.2">
    <molecule id="P59259-1"/>
    <property type="protein sequence ID" value="AT1G07820.2"/>
    <property type="gene ID" value="AT1G07820"/>
</dbReference>
<dbReference type="EnsemblPlants" id="AT2G28740.1">
    <molecule id="P59259-1"/>
    <property type="protein sequence ID" value="AT2G28740.1"/>
    <property type="gene ID" value="AT2G28740"/>
</dbReference>
<dbReference type="EnsemblPlants" id="AT3G45930.1">
    <molecule id="P59259-1"/>
    <property type="protein sequence ID" value="AT3G45930.1"/>
    <property type="gene ID" value="AT3G45930"/>
</dbReference>
<dbReference type="EnsemblPlants" id="AT3G46320.1">
    <molecule id="P59259-1"/>
    <property type="protein sequence ID" value="AT3G46320.1"/>
    <property type="gene ID" value="AT3G46320"/>
</dbReference>
<dbReference type="EnsemblPlants" id="AT3G53730.1">
    <molecule id="P59259-1"/>
    <property type="protein sequence ID" value="AT3G53730.1"/>
    <property type="gene ID" value="AT3G53730"/>
</dbReference>
<dbReference type="EnsemblPlants" id="AT5G59690.1">
    <molecule id="P59259-1"/>
    <property type="protein sequence ID" value="AT5G59690.1"/>
    <property type="gene ID" value="AT5G59690"/>
</dbReference>
<dbReference type="EnsemblPlants" id="AT5G59970.1">
    <molecule id="P59259-1"/>
    <property type="protein sequence ID" value="AT5G59970.1"/>
    <property type="gene ID" value="AT5G59970"/>
</dbReference>
<dbReference type="EnsemblPlants" id="AT5G59970.2">
    <molecule id="P59259-1"/>
    <property type="protein sequence ID" value="AT5G59970.2"/>
    <property type="gene ID" value="AT5G59970"/>
</dbReference>
<dbReference type="GeneID" id="817423"/>
<dbReference type="GeneID" id="823736"/>
<dbReference type="GeneID" id="823777"/>
<dbReference type="GeneID" id="824540"/>
<dbReference type="GeneID" id="836090"/>
<dbReference type="GeneID" id="836119"/>
<dbReference type="GeneID" id="837279"/>
<dbReference type="GeneID" id="837297"/>
<dbReference type="Gramene" id="AT1G07660.1">
    <molecule id="P59259-1"/>
    <property type="protein sequence ID" value="AT1G07660.1"/>
    <property type="gene ID" value="AT1G07660"/>
</dbReference>
<dbReference type="Gramene" id="AT1G07820.1">
    <molecule id="P59259-1"/>
    <property type="protein sequence ID" value="AT1G07820.1"/>
    <property type="gene ID" value="AT1G07820"/>
</dbReference>
<dbReference type="Gramene" id="AT1G07820.2">
    <molecule id="P59259-1"/>
    <property type="protein sequence ID" value="AT1G07820.2"/>
    <property type="gene ID" value="AT1G07820"/>
</dbReference>
<dbReference type="Gramene" id="AT2G28740.1">
    <molecule id="P59259-1"/>
    <property type="protein sequence ID" value="AT2G28740.1"/>
    <property type="gene ID" value="AT2G28740"/>
</dbReference>
<dbReference type="Gramene" id="AT3G45930.1">
    <molecule id="P59259-1"/>
    <property type="protein sequence ID" value="AT3G45930.1"/>
    <property type="gene ID" value="AT3G45930"/>
</dbReference>
<dbReference type="Gramene" id="AT3G46320.1">
    <molecule id="P59259-1"/>
    <property type="protein sequence ID" value="AT3G46320.1"/>
    <property type="gene ID" value="AT3G46320"/>
</dbReference>
<dbReference type="Gramene" id="AT3G53730.1">
    <molecule id="P59259-1"/>
    <property type="protein sequence ID" value="AT3G53730.1"/>
    <property type="gene ID" value="AT3G53730"/>
</dbReference>
<dbReference type="Gramene" id="AT5G59690.1">
    <molecule id="P59259-1"/>
    <property type="protein sequence ID" value="AT5G59690.1"/>
    <property type="gene ID" value="AT5G59690"/>
</dbReference>
<dbReference type="Gramene" id="AT5G59970.1">
    <molecule id="P59259-1"/>
    <property type="protein sequence ID" value="AT5G59970.1"/>
    <property type="gene ID" value="AT5G59970"/>
</dbReference>
<dbReference type="Gramene" id="AT5G59970.2">
    <molecule id="P59259-1"/>
    <property type="protein sequence ID" value="AT5G59970.2"/>
    <property type="gene ID" value="AT5G59970"/>
</dbReference>
<dbReference type="KEGG" id="ath:AT1G07660"/>
<dbReference type="KEGG" id="ath:AT1G07820"/>
<dbReference type="KEGG" id="ath:AT2G28740"/>
<dbReference type="KEGG" id="ath:AT3G45930"/>
<dbReference type="KEGG" id="ath:AT3G46320"/>
<dbReference type="KEGG" id="ath:AT3G53730"/>
<dbReference type="KEGG" id="ath:AT5G59690"/>
<dbReference type="KEGG" id="ath:AT5G59970"/>
<dbReference type="Araport" id="AT1G07660"/>
<dbReference type="Araport" id="AT1G07820"/>
<dbReference type="Araport" id="AT2G28740"/>
<dbReference type="Araport" id="AT3G45930"/>
<dbReference type="Araport" id="AT3G46320"/>
<dbReference type="Araport" id="AT3G53730"/>
<dbReference type="Araport" id="AT5G59690"/>
<dbReference type="Araport" id="AT5G59970"/>
<dbReference type="TAIR" id="AT1G07660"/>
<dbReference type="TAIR" id="AT1G07820"/>
<dbReference type="TAIR" id="AT2G28740">
    <property type="gene designation" value="HIS4"/>
</dbReference>
<dbReference type="TAIR" id="AT3G45930"/>
<dbReference type="TAIR" id="AT3G46320"/>
<dbReference type="TAIR" id="AT3G53730"/>
<dbReference type="TAIR" id="AT5G59690"/>
<dbReference type="TAIR" id="AT5G59970"/>
<dbReference type="eggNOG" id="KOG3467">
    <property type="taxonomic scope" value="Eukaryota"/>
</dbReference>
<dbReference type="HOGENOM" id="CLU_109117_2_3_1"/>
<dbReference type="InParanoid" id="P59259"/>
<dbReference type="OMA" id="QKEHING"/>
<dbReference type="OrthoDB" id="1092367at2759"/>
<dbReference type="PhylomeDB" id="P59259"/>
<dbReference type="CD-CODE" id="4299E36E">
    <property type="entry name" value="Nucleolus"/>
</dbReference>
<dbReference type="PRO" id="PR:P59259"/>
<dbReference type="Proteomes" id="UP000006548">
    <property type="component" value="Chromosome 1"/>
</dbReference>
<dbReference type="Proteomes" id="UP000006548">
    <property type="component" value="Chromosome 2"/>
</dbReference>
<dbReference type="Proteomes" id="UP000006548">
    <property type="component" value="Chromosome 3"/>
</dbReference>
<dbReference type="Proteomes" id="UP000006548">
    <property type="component" value="Chromosome 5"/>
</dbReference>
<dbReference type="ExpressionAtlas" id="P59259">
    <property type="expression patterns" value="baseline and differential"/>
</dbReference>
<dbReference type="GO" id="GO:0009507">
    <property type="term" value="C:chloroplast"/>
    <property type="evidence" value="ECO:0007005"/>
    <property type="project" value="TAIR"/>
</dbReference>
<dbReference type="GO" id="GO:0005829">
    <property type="term" value="C:cytosol"/>
    <property type="evidence" value="ECO:0007005"/>
    <property type="project" value="TAIR"/>
</dbReference>
<dbReference type="GO" id="GO:0005576">
    <property type="term" value="C:extracellular region"/>
    <property type="evidence" value="ECO:0007005"/>
    <property type="project" value="TAIR"/>
</dbReference>
<dbReference type="GO" id="GO:0005730">
    <property type="term" value="C:nucleolus"/>
    <property type="evidence" value="ECO:0007005"/>
    <property type="project" value="TAIR"/>
</dbReference>
<dbReference type="GO" id="GO:0000786">
    <property type="term" value="C:nucleosome"/>
    <property type="evidence" value="ECO:0000303"/>
    <property type="project" value="TAIR"/>
</dbReference>
<dbReference type="GO" id="GO:0005777">
    <property type="term" value="C:peroxisome"/>
    <property type="evidence" value="ECO:0007005"/>
    <property type="project" value="TAIR"/>
</dbReference>
<dbReference type="GO" id="GO:0000325">
    <property type="term" value="C:plant-type vacuole"/>
    <property type="evidence" value="ECO:0007005"/>
    <property type="project" value="TAIR"/>
</dbReference>
<dbReference type="GO" id="GO:0005886">
    <property type="term" value="C:plasma membrane"/>
    <property type="evidence" value="ECO:0007005"/>
    <property type="project" value="TAIR"/>
</dbReference>
<dbReference type="GO" id="GO:0009506">
    <property type="term" value="C:plasmodesma"/>
    <property type="evidence" value="ECO:0007005"/>
    <property type="project" value="TAIR"/>
</dbReference>
<dbReference type="GO" id="GO:0009536">
    <property type="term" value="C:plastid"/>
    <property type="evidence" value="ECO:0007005"/>
    <property type="project" value="TAIR"/>
</dbReference>
<dbReference type="GO" id="GO:0009579">
    <property type="term" value="C:thylakoid"/>
    <property type="evidence" value="ECO:0007005"/>
    <property type="project" value="TAIR"/>
</dbReference>
<dbReference type="GO" id="GO:0003677">
    <property type="term" value="F:DNA binding"/>
    <property type="evidence" value="ECO:0000250"/>
    <property type="project" value="TAIR"/>
</dbReference>
<dbReference type="GO" id="GO:0046982">
    <property type="term" value="F:protein heterodimerization activity"/>
    <property type="evidence" value="ECO:0007669"/>
    <property type="project" value="InterPro"/>
</dbReference>
<dbReference type="GO" id="GO:0030527">
    <property type="term" value="F:structural constituent of chromatin"/>
    <property type="evidence" value="ECO:0007669"/>
    <property type="project" value="InterPro"/>
</dbReference>
<dbReference type="GO" id="GO:0009414">
    <property type="term" value="P:response to water deprivation"/>
    <property type="evidence" value="ECO:0000270"/>
    <property type="project" value="TAIR"/>
</dbReference>
<dbReference type="CDD" id="cd22912">
    <property type="entry name" value="HFD_H4"/>
    <property type="match status" value="1"/>
</dbReference>
<dbReference type="FunFam" id="1.10.20.10:FF:000002">
    <property type="entry name" value="Histone H4"/>
    <property type="match status" value="1"/>
</dbReference>
<dbReference type="Gene3D" id="1.10.20.10">
    <property type="entry name" value="Histone, subunit A"/>
    <property type="match status" value="1"/>
</dbReference>
<dbReference type="InterPro" id="IPR035425">
    <property type="entry name" value="CENP-T/H4_C"/>
</dbReference>
<dbReference type="InterPro" id="IPR009072">
    <property type="entry name" value="Histone-fold"/>
</dbReference>
<dbReference type="InterPro" id="IPR001951">
    <property type="entry name" value="Histone_H4"/>
</dbReference>
<dbReference type="InterPro" id="IPR019809">
    <property type="entry name" value="Histone_H4_CS"/>
</dbReference>
<dbReference type="PANTHER" id="PTHR10484">
    <property type="entry name" value="HISTONE H4"/>
    <property type="match status" value="1"/>
</dbReference>
<dbReference type="Pfam" id="PF15511">
    <property type="entry name" value="CENP-T_C"/>
    <property type="match status" value="1"/>
</dbReference>
<dbReference type="PRINTS" id="PR00623">
    <property type="entry name" value="HISTONEH4"/>
</dbReference>
<dbReference type="SMART" id="SM00417">
    <property type="entry name" value="H4"/>
    <property type="match status" value="1"/>
</dbReference>
<dbReference type="SUPFAM" id="SSF47113">
    <property type="entry name" value="Histone-fold"/>
    <property type="match status" value="1"/>
</dbReference>
<dbReference type="PROSITE" id="PS00047">
    <property type="entry name" value="HISTONE_H4"/>
    <property type="match status" value="1"/>
</dbReference>
<sequence length="103" mass="11409">MSGRGKGGKGLGKGGAKRHRKVLRDNIQGITKPAIRRLARRGGVKRISGLIYEETRGVLKIFLENVIRDAVTYTEHARRKTVTAMDVVYALKRQGRTLYGFGG</sequence>
<reference key="1">
    <citation type="journal article" date="1987" name="Plant Mol. Biol.">
        <title>Genomic organization and nucleotide sequences of two histone H3 and two histone H4 genes of Arabidopsis thaliana.</title>
        <authorList>
            <person name="Chaboute M.-E."/>
            <person name="Chaubet N."/>
            <person name="Philipps G."/>
            <person name="Ehling M."/>
            <person name="Gigot C."/>
        </authorList>
    </citation>
    <scope>NUCLEOTIDE SEQUENCE [GENOMIC DNA]</scope>
</reference>
<reference key="2">
    <citation type="journal article" date="2000" name="Nature">
        <title>Sequence and analysis of chromosome 1 of the plant Arabidopsis thaliana.</title>
        <authorList>
            <person name="Theologis A."/>
            <person name="Ecker J.R."/>
            <person name="Palm C.J."/>
            <person name="Federspiel N.A."/>
            <person name="Kaul S."/>
            <person name="White O."/>
            <person name="Alonso J."/>
            <person name="Altafi H."/>
            <person name="Araujo R."/>
            <person name="Bowman C.L."/>
            <person name="Brooks S.Y."/>
            <person name="Buehler E."/>
            <person name="Chan A."/>
            <person name="Chao Q."/>
            <person name="Chen H."/>
            <person name="Cheuk R.F."/>
            <person name="Chin C.W."/>
            <person name="Chung M.K."/>
            <person name="Conn L."/>
            <person name="Conway A.B."/>
            <person name="Conway A.R."/>
            <person name="Creasy T.H."/>
            <person name="Dewar K."/>
            <person name="Dunn P."/>
            <person name="Etgu P."/>
            <person name="Feldblyum T.V."/>
            <person name="Feng J.-D."/>
            <person name="Fong B."/>
            <person name="Fujii C.Y."/>
            <person name="Gill J.E."/>
            <person name="Goldsmith A.D."/>
            <person name="Haas B."/>
            <person name="Hansen N.F."/>
            <person name="Hughes B."/>
            <person name="Huizar L."/>
            <person name="Hunter J.L."/>
            <person name="Jenkins J."/>
            <person name="Johnson-Hopson C."/>
            <person name="Khan S."/>
            <person name="Khaykin E."/>
            <person name="Kim C.J."/>
            <person name="Koo H.L."/>
            <person name="Kremenetskaia I."/>
            <person name="Kurtz D.B."/>
            <person name="Kwan A."/>
            <person name="Lam B."/>
            <person name="Langin-Hooper S."/>
            <person name="Lee A."/>
            <person name="Lee J.M."/>
            <person name="Lenz C.A."/>
            <person name="Li J.H."/>
            <person name="Li Y.-P."/>
            <person name="Lin X."/>
            <person name="Liu S.X."/>
            <person name="Liu Z.A."/>
            <person name="Luros J.S."/>
            <person name="Maiti R."/>
            <person name="Marziali A."/>
            <person name="Militscher J."/>
            <person name="Miranda M."/>
            <person name="Nguyen M."/>
            <person name="Nierman W.C."/>
            <person name="Osborne B.I."/>
            <person name="Pai G."/>
            <person name="Peterson J."/>
            <person name="Pham P.K."/>
            <person name="Rizzo M."/>
            <person name="Rooney T."/>
            <person name="Rowley D."/>
            <person name="Sakano H."/>
            <person name="Salzberg S.L."/>
            <person name="Schwartz J.R."/>
            <person name="Shinn P."/>
            <person name="Southwick A.M."/>
            <person name="Sun H."/>
            <person name="Tallon L.J."/>
            <person name="Tambunga G."/>
            <person name="Toriumi M.J."/>
            <person name="Town C.D."/>
            <person name="Utterback T."/>
            <person name="Van Aken S."/>
            <person name="Vaysberg M."/>
            <person name="Vysotskaia V.S."/>
            <person name="Walker M."/>
            <person name="Wu D."/>
            <person name="Yu G."/>
            <person name="Fraser C.M."/>
            <person name="Venter J.C."/>
            <person name="Davis R.W."/>
        </authorList>
    </citation>
    <scope>NUCLEOTIDE SEQUENCE [LARGE SCALE GENOMIC DNA] (AT1G07660 AND AT1G07820)</scope>
    <source>
        <strain>cv. Columbia</strain>
    </source>
</reference>
<reference key="3">
    <citation type="journal article" date="1999" name="Nature">
        <title>Sequence and analysis of chromosome 2 of the plant Arabidopsis thaliana.</title>
        <authorList>
            <person name="Lin X."/>
            <person name="Kaul S."/>
            <person name="Rounsley S.D."/>
            <person name="Shea T.P."/>
            <person name="Benito M.-I."/>
            <person name="Town C.D."/>
            <person name="Fujii C.Y."/>
            <person name="Mason T.M."/>
            <person name="Bowman C.L."/>
            <person name="Barnstead M.E."/>
            <person name="Feldblyum T.V."/>
            <person name="Buell C.R."/>
            <person name="Ketchum K.A."/>
            <person name="Lee J.J."/>
            <person name="Ronning C.M."/>
            <person name="Koo H.L."/>
            <person name="Moffat K.S."/>
            <person name="Cronin L.A."/>
            <person name="Shen M."/>
            <person name="Pai G."/>
            <person name="Van Aken S."/>
            <person name="Umayam L."/>
            <person name="Tallon L.J."/>
            <person name="Gill J.E."/>
            <person name="Adams M.D."/>
            <person name="Carrera A.J."/>
            <person name="Creasy T.H."/>
            <person name="Goodman H.M."/>
            <person name="Somerville C.R."/>
            <person name="Copenhaver G.P."/>
            <person name="Preuss D."/>
            <person name="Nierman W.C."/>
            <person name="White O."/>
            <person name="Eisen J.A."/>
            <person name="Salzberg S.L."/>
            <person name="Fraser C.M."/>
            <person name="Venter J.C."/>
        </authorList>
    </citation>
    <scope>NUCLEOTIDE SEQUENCE [LARGE SCALE GENOMIC DNA] (AT2G28740)</scope>
    <source>
        <strain>cv. Columbia</strain>
    </source>
</reference>
<reference key="4">
    <citation type="journal article" date="2000" name="Nature">
        <title>Sequence and analysis of chromosome 3 of the plant Arabidopsis thaliana.</title>
        <authorList>
            <person name="Salanoubat M."/>
            <person name="Lemcke K."/>
            <person name="Rieger M."/>
            <person name="Ansorge W."/>
            <person name="Unseld M."/>
            <person name="Fartmann B."/>
            <person name="Valle G."/>
            <person name="Bloecker H."/>
            <person name="Perez-Alonso M."/>
            <person name="Obermaier B."/>
            <person name="Delseny M."/>
            <person name="Boutry M."/>
            <person name="Grivell L.A."/>
            <person name="Mache R."/>
            <person name="Puigdomenech P."/>
            <person name="De Simone V."/>
            <person name="Choisne N."/>
            <person name="Artiguenave F."/>
            <person name="Robert C."/>
            <person name="Brottier P."/>
            <person name="Wincker P."/>
            <person name="Cattolico L."/>
            <person name="Weissenbach J."/>
            <person name="Saurin W."/>
            <person name="Quetier F."/>
            <person name="Schaefer M."/>
            <person name="Mueller-Auer S."/>
            <person name="Gabel C."/>
            <person name="Fuchs M."/>
            <person name="Benes V."/>
            <person name="Wurmbach E."/>
            <person name="Drzonek H."/>
            <person name="Erfle H."/>
            <person name="Jordan N."/>
            <person name="Bangert S."/>
            <person name="Wiedelmann R."/>
            <person name="Kranz H."/>
            <person name="Voss H."/>
            <person name="Holland R."/>
            <person name="Brandt P."/>
            <person name="Nyakatura G."/>
            <person name="Vezzi A."/>
            <person name="D'Angelo M."/>
            <person name="Pallavicini A."/>
            <person name="Toppo S."/>
            <person name="Simionati B."/>
            <person name="Conrad A."/>
            <person name="Hornischer K."/>
            <person name="Kauer G."/>
            <person name="Loehnert T.-H."/>
            <person name="Nordsiek G."/>
            <person name="Reichelt J."/>
            <person name="Scharfe M."/>
            <person name="Schoen O."/>
            <person name="Bargues M."/>
            <person name="Terol J."/>
            <person name="Climent J."/>
            <person name="Navarro P."/>
            <person name="Collado C."/>
            <person name="Perez-Perez A."/>
            <person name="Ottenwaelder B."/>
            <person name="Duchemin D."/>
            <person name="Cooke R."/>
            <person name="Laudie M."/>
            <person name="Berger-Llauro C."/>
            <person name="Purnelle B."/>
            <person name="Masuy D."/>
            <person name="de Haan M."/>
            <person name="Maarse A.C."/>
            <person name="Alcaraz J.-P."/>
            <person name="Cottet A."/>
            <person name="Casacuberta E."/>
            <person name="Monfort A."/>
            <person name="Argiriou A."/>
            <person name="Flores M."/>
            <person name="Liguori R."/>
            <person name="Vitale D."/>
            <person name="Mannhaupt G."/>
            <person name="Haase D."/>
            <person name="Schoof H."/>
            <person name="Rudd S."/>
            <person name="Zaccaria P."/>
            <person name="Mewes H.-W."/>
            <person name="Mayer K.F.X."/>
            <person name="Kaul S."/>
            <person name="Town C.D."/>
            <person name="Koo H.L."/>
            <person name="Tallon L.J."/>
            <person name="Jenkins J."/>
            <person name="Rooney T."/>
            <person name="Rizzo M."/>
            <person name="Walts A."/>
            <person name="Utterback T."/>
            <person name="Fujii C.Y."/>
            <person name="Shea T.P."/>
            <person name="Creasy T.H."/>
            <person name="Haas B."/>
            <person name="Maiti R."/>
            <person name="Wu D."/>
            <person name="Peterson J."/>
            <person name="Van Aken S."/>
            <person name="Pai G."/>
            <person name="Militscher J."/>
            <person name="Sellers P."/>
            <person name="Gill J.E."/>
            <person name="Feldblyum T.V."/>
            <person name="Preuss D."/>
            <person name="Lin X."/>
            <person name="Nierman W.C."/>
            <person name="Salzberg S.L."/>
            <person name="White O."/>
            <person name="Venter J.C."/>
            <person name="Fraser C.M."/>
            <person name="Kaneko T."/>
            <person name="Nakamura Y."/>
            <person name="Sato S."/>
            <person name="Kato T."/>
            <person name="Asamizu E."/>
            <person name="Sasamoto S."/>
            <person name="Kimura T."/>
            <person name="Idesawa K."/>
            <person name="Kawashima K."/>
            <person name="Kishida Y."/>
            <person name="Kiyokawa C."/>
            <person name="Kohara M."/>
            <person name="Matsumoto M."/>
            <person name="Matsuno A."/>
            <person name="Muraki A."/>
            <person name="Nakayama S."/>
            <person name="Nakazaki N."/>
            <person name="Shinpo S."/>
            <person name="Takeuchi C."/>
            <person name="Wada T."/>
            <person name="Watanabe A."/>
            <person name="Yamada M."/>
            <person name="Yasuda M."/>
            <person name="Tabata S."/>
        </authorList>
    </citation>
    <scope>NUCLEOTIDE SEQUENCE [LARGE SCALE GENOMIC DNA] (AT3G45930; AT3G46320 AND AT3G53730)</scope>
    <source>
        <strain>cv. Columbia</strain>
    </source>
</reference>
<reference key="5">
    <citation type="journal article" date="1997" name="DNA Res.">
        <title>Structural analysis of Arabidopsis thaliana chromosome 5. II. Sequence features of the regions of 1,044,062 bp covered by thirteen physically assigned P1 clones.</title>
        <authorList>
            <person name="Kotani H."/>
            <person name="Nakamura Y."/>
            <person name="Sato S."/>
            <person name="Kaneko T."/>
            <person name="Asamizu E."/>
            <person name="Miyajima N."/>
            <person name="Tabata S."/>
        </authorList>
    </citation>
    <scope>NUCLEOTIDE SEQUENCE [LARGE SCALE GENOMIC DNA]</scope>
    <source>
        <strain>cv. Columbia</strain>
    </source>
</reference>
<reference key="6">
    <citation type="journal article" date="1998" name="DNA Res.">
        <title>Structural analysis of Arabidopsis thaliana chromosome 5. VII. Sequence features of the regions of 1,013,767 bp covered by sixteen physically assigned P1 and TAC clones.</title>
        <authorList>
            <person name="Nakamura Y."/>
            <person name="Sato S."/>
            <person name="Asamizu E."/>
            <person name="Kaneko T."/>
            <person name="Kotani H."/>
            <person name="Miyajima N."/>
            <person name="Tabata S."/>
        </authorList>
    </citation>
    <scope>NUCLEOTIDE SEQUENCE [LARGE SCALE GENOMIC DNA]</scope>
    <source>
        <strain>cv. Columbia</strain>
    </source>
</reference>
<reference key="7">
    <citation type="journal article" date="2017" name="Plant J.">
        <title>Araport11: a complete reannotation of the Arabidopsis thaliana reference genome.</title>
        <authorList>
            <person name="Cheng C.Y."/>
            <person name="Krishnakumar V."/>
            <person name="Chan A.P."/>
            <person name="Thibaud-Nissen F."/>
            <person name="Schobel S."/>
            <person name="Town C.D."/>
        </authorList>
    </citation>
    <scope>GENOME REANNOTATION</scope>
    <source>
        <strain>cv. Columbia</strain>
    </source>
</reference>
<reference key="8">
    <citation type="journal article" date="2003" name="Science">
        <title>Empirical analysis of transcriptional activity in the Arabidopsis genome.</title>
        <authorList>
            <person name="Yamada K."/>
            <person name="Lim J."/>
            <person name="Dale J.M."/>
            <person name="Chen H."/>
            <person name="Shinn P."/>
            <person name="Palm C.J."/>
            <person name="Southwick A.M."/>
            <person name="Wu H.C."/>
            <person name="Kim C.J."/>
            <person name="Nguyen M."/>
            <person name="Pham P.K."/>
            <person name="Cheuk R.F."/>
            <person name="Karlin-Newmann G."/>
            <person name="Liu S.X."/>
            <person name="Lam B."/>
            <person name="Sakano H."/>
            <person name="Wu T."/>
            <person name="Yu G."/>
            <person name="Miranda M."/>
            <person name="Quach H.L."/>
            <person name="Tripp M."/>
            <person name="Chang C.H."/>
            <person name="Lee J.M."/>
            <person name="Toriumi M.J."/>
            <person name="Chan M.M."/>
            <person name="Tang C.C."/>
            <person name="Onodera C.S."/>
            <person name="Deng J.M."/>
            <person name="Akiyama K."/>
            <person name="Ansari Y."/>
            <person name="Arakawa T."/>
            <person name="Banh J."/>
            <person name="Banno F."/>
            <person name="Bowser L."/>
            <person name="Brooks S.Y."/>
            <person name="Carninci P."/>
            <person name="Chao Q."/>
            <person name="Choy N."/>
            <person name="Enju A."/>
            <person name="Goldsmith A.D."/>
            <person name="Gurjal M."/>
            <person name="Hansen N.F."/>
            <person name="Hayashizaki Y."/>
            <person name="Johnson-Hopson C."/>
            <person name="Hsuan V.W."/>
            <person name="Iida K."/>
            <person name="Karnes M."/>
            <person name="Khan S."/>
            <person name="Koesema E."/>
            <person name="Ishida J."/>
            <person name="Jiang P.X."/>
            <person name="Jones T."/>
            <person name="Kawai J."/>
            <person name="Kamiya A."/>
            <person name="Meyers C."/>
            <person name="Nakajima M."/>
            <person name="Narusaka M."/>
            <person name="Seki M."/>
            <person name="Sakurai T."/>
            <person name="Satou M."/>
            <person name="Tamse R."/>
            <person name="Vaysberg M."/>
            <person name="Wallender E.K."/>
            <person name="Wong C."/>
            <person name="Yamamura Y."/>
            <person name="Yuan S."/>
            <person name="Shinozaki K."/>
            <person name="Davis R.W."/>
            <person name="Theologis A."/>
            <person name="Ecker J.R."/>
        </authorList>
    </citation>
    <scope>NUCLEOTIDE SEQUENCE [LARGE SCALE MRNA]</scope>
    <source>
        <strain>cv. Columbia</strain>
    </source>
</reference>
<reference key="9">
    <citation type="submission" date="2002-03" db="EMBL/GenBank/DDBJ databases">
        <title>Full-length cDNA from Arabidopsis thaliana.</title>
        <authorList>
            <person name="Brover V.V."/>
            <person name="Troukhan M.E."/>
            <person name="Alexandrov N.A."/>
            <person name="Lu Y.-P."/>
            <person name="Flavell R.B."/>
            <person name="Feldmann K.A."/>
        </authorList>
    </citation>
    <scope>NUCLEOTIDE SEQUENCE [LARGE SCALE MRNA]</scope>
</reference>
<reference key="10">
    <citation type="journal article" date="2007" name="Genes Dev.">
        <title>VIM1, a methylcytosine-binding protein required for centromeric heterochromatinization.</title>
        <authorList>
            <person name="Woo H.R."/>
            <person name="Pontes O."/>
            <person name="Pikaard C.S."/>
            <person name="Richards E.J."/>
        </authorList>
    </citation>
    <scope>INTERACTION WITH ORTH2</scope>
</reference>
<reference key="11">
    <citation type="journal article" date="2007" name="Mol. Cell. Proteomics">
        <title>Multidimensional protein identification technology (MudPIT) analysis of ubiquitinated proteins in plants.</title>
        <authorList>
            <person name="Maor R."/>
            <person name="Jones A."/>
            <person name="Nuehse T.S."/>
            <person name="Studholme D.J."/>
            <person name="Peck S.C."/>
            <person name="Shirasu K."/>
        </authorList>
    </citation>
    <scope>IDENTIFICATION BY MASS SPECTROMETRY [LARGE SCALE ANALYSIS]</scope>
    <source>
        <strain>cv. Landsberg erecta</strain>
    </source>
</reference>
<reference key="12">
    <citation type="journal article" date="2009" name="Plant J.">
        <title>AtMBD9 modulates Arabidopsis development through the dual epigenetic pathways of DNA methylation and histone acetylation.</title>
        <authorList>
            <person name="Yaish M.W.F."/>
            <person name="Peng M."/>
            <person name="Rothstein S.J."/>
        </authorList>
    </citation>
    <scope>ACETYLATION BY MBD9</scope>
</reference>
<reference key="13">
    <citation type="journal article" date="2013" name="Proc. Natl. Acad. Sci. U.S.A.">
        <title>Arabidopsis thaliana AHL family modulates hypocotyl growth redundantly by interacting with each other via the PPC/DUF296 domain.</title>
        <authorList>
            <person name="Zhao J."/>
            <person name="Favero D.S."/>
            <person name="Peng H."/>
            <person name="Neff M.M."/>
        </authorList>
    </citation>
    <scope>INTERACTION WITH AHL27</scope>
</reference>
<proteinExistence type="evidence at protein level"/>